<keyword id="KW-0328">Glycosyltransferase</keyword>
<keyword id="KW-0441">Lipid A biosynthesis</keyword>
<keyword id="KW-0444">Lipid biosynthesis</keyword>
<keyword id="KW-0443">Lipid metabolism</keyword>
<keyword id="KW-0808">Transferase</keyword>
<dbReference type="EC" id="2.4.1.182" evidence="1"/>
<dbReference type="EMBL" id="AM039952">
    <property type="protein sequence ID" value="CAJ23096.1"/>
    <property type="molecule type" value="Genomic_DNA"/>
</dbReference>
<dbReference type="SMR" id="Q3BVL7"/>
<dbReference type="STRING" id="456327.BJD11_15320"/>
<dbReference type="CAZy" id="GT19">
    <property type="family name" value="Glycosyltransferase Family 19"/>
</dbReference>
<dbReference type="KEGG" id="xcv:XCV1465"/>
<dbReference type="eggNOG" id="COG0763">
    <property type="taxonomic scope" value="Bacteria"/>
</dbReference>
<dbReference type="HOGENOM" id="CLU_036577_3_0_6"/>
<dbReference type="UniPathway" id="UPA00973"/>
<dbReference type="Proteomes" id="UP000007069">
    <property type="component" value="Chromosome"/>
</dbReference>
<dbReference type="GO" id="GO:0016020">
    <property type="term" value="C:membrane"/>
    <property type="evidence" value="ECO:0007669"/>
    <property type="project" value="GOC"/>
</dbReference>
<dbReference type="GO" id="GO:0008915">
    <property type="term" value="F:lipid-A-disaccharide synthase activity"/>
    <property type="evidence" value="ECO:0007669"/>
    <property type="project" value="UniProtKB-UniRule"/>
</dbReference>
<dbReference type="GO" id="GO:0005543">
    <property type="term" value="F:phospholipid binding"/>
    <property type="evidence" value="ECO:0007669"/>
    <property type="project" value="TreeGrafter"/>
</dbReference>
<dbReference type="GO" id="GO:0009245">
    <property type="term" value="P:lipid A biosynthetic process"/>
    <property type="evidence" value="ECO:0007669"/>
    <property type="project" value="UniProtKB-UniRule"/>
</dbReference>
<dbReference type="CDD" id="cd01635">
    <property type="entry name" value="Glycosyltransferase_GTB-type"/>
    <property type="match status" value="1"/>
</dbReference>
<dbReference type="HAMAP" id="MF_00392">
    <property type="entry name" value="LpxB"/>
    <property type="match status" value="1"/>
</dbReference>
<dbReference type="InterPro" id="IPR003835">
    <property type="entry name" value="Glyco_trans_19"/>
</dbReference>
<dbReference type="NCBIfam" id="TIGR00215">
    <property type="entry name" value="lpxB"/>
    <property type="match status" value="1"/>
</dbReference>
<dbReference type="PANTHER" id="PTHR30372">
    <property type="entry name" value="LIPID-A-DISACCHARIDE SYNTHASE"/>
    <property type="match status" value="1"/>
</dbReference>
<dbReference type="PANTHER" id="PTHR30372:SF4">
    <property type="entry name" value="LIPID-A-DISACCHARIDE SYNTHASE, MITOCHONDRIAL-RELATED"/>
    <property type="match status" value="1"/>
</dbReference>
<dbReference type="Pfam" id="PF02684">
    <property type="entry name" value="LpxB"/>
    <property type="match status" value="1"/>
</dbReference>
<dbReference type="SUPFAM" id="SSF53756">
    <property type="entry name" value="UDP-Glycosyltransferase/glycogen phosphorylase"/>
    <property type="match status" value="1"/>
</dbReference>
<sequence length="439" mass="47534">MKEIGNRESGIVDGQRNGASVGSDPTALPIPHSPLPIPGAHARPPRIALIAGEASGDILGAGLIEQLRLRYPNAEFVGIGGDAMRGVGCQTWFDASELAVMGLTEVLRHLPRLLKLRSAFRERVLAWKPDVFIGIDAPDFNLPVERWLKQRGIKTVHYVSPSVWAWREKRAEKIGVSADLVLCLFPMEPPIYARHGVDARFVGHPMADDIAYQADRAAARATLGLSASSTVLAVLPGSRHGEISRLGDTFFQAAWLVSEHLPNLHVLVPAANPGCKQLLAEQLSRSSLPVMRSHLLDGQARTAMLAADVVLLASGTATLEAMLVKRPMVVGYKVAPLTYRIVKLLGLLKVNRYALPNILANDDLAPELMQDDCAPERLCVALLDWFKHPDKVAALQPRYLALHAQLRRDASARAADAVAGLLEGRDSEVGIWDSAGAKA</sequence>
<reference key="1">
    <citation type="journal article" date="2005" name="J. Bacteriol.">
        <title>Insights into genome plasticity and pathogenicity of the plant pathogenic Bacterium Xanthomonas campestris pv. vesicatoria revealed by the complete genome sequence.</title>
        <authorList>
            <person name="Thieme F."/>
            <person name="Koebnik R."/>
            <person name="Bekel T."/>
            <person name="Berger C."/>
            <person name="Boch J."/>
            <person name="Buettner D."/>
            <person name="Caldana C."/>
            <person name="Gaigalat L."/>
            <person name="Goesmann A."/>
            <person name="Kay S."/>
            <person name="Kirchner O."/>
            <person name="Lanz C."/>
            <person name="Linke B."/>
            <person name="McHardy A.C."/>
            <person name="Meyer F."/>
            <person name="Mittenhuber G."/>
            <person name="Nies D.H."/>
            <person name="Niesbach-Kloesgen U."/>
            <person name="Patschkowski T."/>
            <person name="Rueckert C."/>
            <person name="Rupp O."/>
            <person name="Schneiker S."/>
            <person name="Schuster S.C."/>
            <person name="Vorhoelter F.J."/>
            <person name="Weber E."/>
            <person name="Puehler A."/>
            <person name="Bonas U."/>
            <person name="Bartels D."/>
            <person name="Kaiser O."/>
        </authorList>
    </citation>
    <scope>NUCLEOTIDE SEQUENCE [LARGE SCALE GENOMIC DNA]</scope>
    <source>
        <strain>85-10</strain>
    </source>
</reference>
<name>LPXB_XANE5</name>
<comment type="function">
    <text evidence="1">Condensation of UDP-2,3-diacylglucosamine and 2,3-diacylglucosamine-1-phosphate to form lipid A disaccharide, a precursor of lipid A, a phosphorylated glycolipid that anchors the lipopolysaccharide to the outer membrane of the cell.</text>
</comment>
<comment type="catalytic activity">
    <reaction evidence="1">
        <text>a lipid X + a UDP-2-N,3-O-bis[(3R)-3-hydroxyacyl]-alpha-D-glucosamine = a lipid A disaccharide + UDP + H(+)</text>
        <dbReference type="Rhea" id="RHEA:67828"/>
        <dbReference type="ChEBI" id="CHEBI:15378"/>
        <dbReference type="ChEBI" id="CHEBI:58223"/>
        <dbReference type="ChEBI" id="CHEBI:137748"/>
        <dbReference type="ChEBI" id="CHEBI:176338"/>
        <dbReference type="ChEBI" id="CHEBI:176343"/>
        <dbReference type="EC" id="2.4.1.182"/>
    </reaction>
</comment>
<comment type="pathway">
    <text evidence="1">Bacterial outer membrane biogenesis; LPS lipid A biosynthesis.</text>
</comment>
<comment type="similarity">
    <text evidence="1">Belongs to the LpxB family.</text>
</comment>
<organism>
    <name type="scientific">Xanthomonas euvesicatoria pv. vesicatoria (strain 85-10)</name>
    <name type="common">Xanthomonas campestris pv. vesicatoria</name>
    <dbReference type="NCBI Taxonomy" id="316273"/>
    <lineage>
        <taxon>Bacteria</taxon>
        <taxon>Pseudomonadati</taxon>
        <taxon>Pseudomonadota</taxon>
        <taxon>Gammaproteobacteria</taxon>
        <taxon>Lysobacterales</taxon>
        <taxon>Lysobacteraceae</taxon>
        <taxon>Xanthomonas</taxon>
    </lineage>
</organism>
<evidence type="ECO:0000255" key="1">
    <source>
        <dbReference type="HAMAP-Rule" id="MF_00392"/>
    </source>
</evidence>
<evidence type="ECO:0000256" key="2">
    <source>
        <dbReference type="SAM" id="MobiDB-lite"/>
    </source>
</evidence>
<feature type="chain" id="PRO_0000255233" description="Lipid-A-disaccharide synthase">
    <location>
        <begin position="1"/>
        <end position="439"/>
    </location>
</feature>
<feature type="region of interest" description="Disordered" evidence="2">
    <location>
        <begin position="1"/>
        <end position="35"/>
    </location>
</feature>
<gene>
    <name evidence="1" type="primary">lpxB</name>
    <name type="ordered locus">XCV1465</name>
</gene>
<protein>
    <recommendedName>
        <fullName evidence="1">Lipid-A-disaccharide synthase</fullName>
        <ecNumber evidence="1">2.4.1.182</ecNumber>
    </recommendedName>
</protein>
<accession>Q3BVL7</accession>
<proteinExistence type="inferred from homology"/>